<keyword id="KW-0067">ATP-binding</keyword>
<keyword id="KW-0963">Cytoplasm</keyword>
<keyword id="KW-0436">Ligase</keyword>
<keyword id="KW-0547">Nucleotide-binding</keyword>
<keyword id="KW-0658">Purine biosynthesis</keyword>
<proteinExistence type="inferred from homology"/>
<dbReference type="EC" id="6.3.3.1" evidence="1"/>
<dbReference type="EMBL" id="CP000679">
    <property type="protein sequence ID" value="ABP67579.1"/>
    <property type="molecule type" value="Genomic_DNA"/>
</dbReference>
<dbReference type="RefSeq" id="WP_011917514.1">
    <property type="nucleotide sequence ID" value="NC_009437.1"/>
</dbReference>
<dbReference type="SMR" id="A4XKZ4"/>
<dbReference type="STRING" id="351627.Csac_1994"/>
<dbReference type="KEGG" id="csc:Csac_1994"/>
<dbReference type="eggNOG" id="COG0150">
    <property type="taxonomic scope" value="Bacteria"/>
</dbReference>
<dbReference type="HOGENOM" id="CLU_047116_0_0_9"/>
<dbReference type="OrthoDB" id="9802507at2"/>
<dbReference type="UniPathway" id="UPA00074">
    <property type="reaction ID" value="UER00129"/>
</dbReference>
<dbReference type="Proteomes" id="UP000000256">
    <property type="component" value="Chromosome"/>
</dbReference>
<dbReference type="GO" id="GO:0005829">
    <property type="term" value="C:cytosol"/>
    <property type="evidence" value="ECO:0007669"/>
    <property type="project" value="TreeGrafter"/>
</dbReference>
<dbReference type="GO" id="GO:0005524">
    <property type="term" value="F:ATP binding"/>
    <property type="evidence" value="ECO:0007669"/>
    <property type="project" value="UniProtKB-KW"/>
</dbReference>
<dbReference type="GO" id="GO:0004637">
    <property type="term" value="F:phosphoribosylamine-glycine ligase activity"/>
    <property type="evidence" value="ECO:0007669"/>
    <property type="project" value="TreeGrafter"/>
</dbReference>
<dbReference type="GO" id="GO:0004641">
    <property type="term" value="F:phosphoribosylformylglycinamidine cyclo-ligase activity"/>
    <property type="evidence" value="ECO:0007669"/>
    <property type="project" value="UniProtKB-UniRule"/>
</dbReference>
<dbReference type="GO" id="GO:0006189">
    <property type="term" value="P:'de novo' IMP biosynthetic process"/>
    <property type="evidence" value="ECO:0007669"/>
    <property type="project" value="UniProtKB-UniRule"/>
</dbReference>
<dbReference type="GO" id="GO:0046084">
    <property type="term" value="P:adenine biosynthetic process"/>
    <property type="evidence" value="ECO:0007669"/>
    <property type="project" value="TreeGrafter"/>
</dbReference>
<dbReference type="CDD" id="cd02196">
    <property type="entry name" value="PurM"/>
    <property type="match status" value="1"/>
</dbReference>
<dbReference type="FunFam" id="3.30.1330.10:FF:000001">
    <property type="entry name" value="Phosphoribosylformylglycinamidine cyclo-ligase"/>
    <property type="match status" value="1"/>
</dbReference>
<dbReference type="FunFam" id="3.90.650.10:FF:000001">
    <property type="entry name" value="Phosphoribosylformylglycinamidine cyclo-ligase"/>
    <property type="match status" value="1"/>
</dbReference>
<dbReference type="Gene3D" id="3.90.650.10">
    <property type="entry name" value="PurM-like C-terminal domain"/>
    <property type="match status" value="1"/>
</dbReference>
<dbReference type="Gene3D" id="3.30.1330.10">
    <property type="entry name" value="PurM-like, N-terminal domain"/>
    <property type="match status" value="1"/>
</dbReference>
<dbReference type="HAMAP" id="MF_00741">
    <property type="entry name" value="AIRS"/>
    <property type="match status" value="1"/>
</dbReference>
<dbReference type="InterPro" id="IPR010918">
    <property type="entry name" value="PurM-like_C_dom"/>
</dbReference>
<dbReference type="InterPro" id="IPR036676">
    <property type="entry name" value="PurM-like_C_sf"/>
</dbReference>
<dbReference type="InterPro" id="IPR016188">
    <property type="entry name" value="PurM-like_N"/>
</dbReference>
<dbReference type="InterPro" id="IPR036921">
    <property type="entry name" value="PurM-like_N_sf"/>
</dbReference>
<dbReference type="InterPro" id="IPR004733">
    <property type="entry name" value="PurM_cligase"/>
</dbReference>
<dbReference type="NCBIfam" id="TIGR00878">
    <property type="entry name" value="purM"/>
    <property type="match status" value="1"/>
</dbReference>
<dbReference type="PANTHER" id="PTHR10520:SF12">
    <property type="entry name" value="TRIFUNCTIONAL PURINE BIOSYNTHETIC PROTEIN ADENOSINE-3"/>
    <property type="match status" value="1"/>
</dbReference>
<dbReference type="PANTHER" id="PTHR10520">
    <property type="entry name" value="TRIFUNCTIONAL PURINE BIOSYNTHETIC PROTEIN ADENOSINE-3-RELATED"/>
    <property type="match status" value="1"/>
</dbReference>
<dbReference type="Pfam" id="PF00586">
    <property type="entry name" value="AIRS"/>
    <property type="match status" value="1"/>
</dbReference>
<dbReference type="Pfam" id="PF02769">
    <property type="entry name" value="AIRS_C"/>
    <property type="match status" value="1"/>
</dbReference>
<dbReference type="SUPFAM" id="SSF56042">
    <property type="entry name" value="PurM C-terminal domain-like"/>
    <property type="match status" value="1"/>
</dbReference>
<dbReference type="SUPFAM" id="SSF55326">
    <property type="entry name" value="PurM N-terminal domain-like"/>
    <property type="match status" value="1"/>
</dbReference>
<gene>
    <name evidence="1" type="primary">purM</name>
    <name type="ordered locus">Csac_1994</name>
</gene>
<evidence type="ECO:0000255" key="1">
    <source>
        <dbReference type="HAMAP-Rule" id="MF_00741"/>
    </source>
</evidence>
<reference key="1">
    <citation type="submission" date="2007-04" db="EMBL/GenBank/DDBJ databases">
        <title>Genome sequence of the thermophilic hydrogen-producing bacterium Caldicellulosiruptor saccharolyticus DSM 8903.</title>
        <authorList>
            <person name="Copeland A."/>
            <person name="Lucas S."/>
            <person name="Lapidus A."/>
            <person name="Barry K."/>
            <person name="Detter J.C."/>
            <person name="Glavina del Rio T."/>
            <person name="Hammon N."/>
            <person name="Israni S."/>
            <person name="Dalin E."/>
            <person name="Tice H."/>
            <person name="Pitluck S."/>
            <person name="Kiss H."/>
            <person name="Brettin T."/>
            <person name="Bruce D."/>
            <person name="Han C."/>
            <person name="Schmutz J."/>
            <person name="Larimer F."/>
            <person name="Land M."/>
            <person name="Hauser L."/>
            <person name="Kyrpides N."/>
            <person name="Lykidis A."/>
            <person name="van de Werken H.J.G."/>
            <person name="Verhaart M.R.A."/>
            <person name="VanFossen A.L."/>
            <person name="Lewis D.L."/>
            <person name="Nichols J.D."/>
            <person name="Goorissen H.P."/>
            <person name="van Niel E.W.J."/>
            <person name="Stams F.J.M."/>
            <person name="Willquist K.U."/>
            <person name="Ward D.E."/>
            <person name="van der Oost J."/>
            <person name="Kelly R.M."/>
            <person name="Kengen S.M.W."/>
            <person name="Richardson P."/>
        </authorList>
    </citation>
    <scope>NUCLEOTIDE SEQUENCE [LARGE SCALE GENOMIC DNA]</scope>
    <source>
        <strain>ATCC 43494 / DSM 8903 / Tp8T 6331</strain>
    </source>
</reference>
<sequence>MTTYKDAGVNIEEGYKAVNLIKNIAKETFDSNVITDIGSFGSMYLLNIENSDYILVSGTDGVGTKLKIAFYMDKHDTVGIDCVAMCVNDILCHGAKPLFFLDYIACGKLKSEKVATIVKGVAEGCKIAGCSLVGGETAEMPGFYREEEYDLAGFAVGLVKKDLAICGQDVKEGDILIGLASNGVHSNGYSLVRKVFGIDENPKVLTKVYEELNLSLGEELLKPTRIYVKPVLKVLEKIKIKGIAHITGGGFFENIPRAFPKGFVAVIEKGTWNILPIFRLIQKYSKVDDNEMFSTFNMGIGMVLIVSKDDVETAMEILNEEGINSYVIGTIEKGEGGVVLR</sequence>
<feature type="chain" id="PRO_1000083453" description="Phosphoribosylformylglycinamidine cyclo-ligase">
    <location>
        <begin position="1"/>
        <end position="341"/>
    </location>
</feature>
<name>PUR5_CALS8</name>
<comment type="catalytic activity">
    <reaction evidence="1">
        <text>2-formamido-N(1)-(5-O-phospho-beta-D-ribosyl)acetamidine + ATP = 5-amino-1-(5-phospho-beta-D-ribosyl)imidazole + ADP + phosphate + H(+)</text>
        <dbReference type="Rhea" id="RHEA:23032"/>
        <dbReference type="ChEBI" id="CHEBI:15378"/>
        <dbReference type="ChEBI" id="CHEBI:30616"/>
        <dbReference type="ChEBI" id="CHEBI:43474"/>
        <dbReference type="ChEBI" id="CHEBI:137981"/>
        <dbReference type="ChEBI" id="CHEBI:147287"/>
        <dbReference type="ChEBI" id="CHEBI:456216"/>
        <dbReference type="EC" id="6.3.3.1"/>
    </reaction>
</comment>
<comment type="pathway">
    <text evidence="1">Purine metabolism; IMP biosynthesis via de novo pathway; 5-amino-1-(5-phospho-D-ribosyl)imidazole from N(2)-formyl-N(1)-(5-phospho-D-ribosyl)glycinamide: step 2/2.</text>
</comment>
<comment type="subcellular location">
    <subcellularLocation>
        <location evidence="1">Cytoplasm</location>
    </subcellularLocation>
</comment>
<comment type="similarity">
    <text evidence="1">Belongs to the AIR synthase family.</text>
</comment>
<protein>
    <recommendedName>
        <fullName evidence="1">Phosphoribosylformylglycinamidine cyclo-ligase</fullName>
        <ecNumber evidence="1">6.3.3.1</ecNumber>
    </recommendedName>
    <alternativeName>
        <fullName evidence="1">AIR synthase</fullName>
    </alternativeName>
    <alternativeName>
        <fullName evidence="1">AIRS</fullName>
    </alternativeName>
    <alternativeName>
        <fullName evidence="1">Phosphoribosyl-aminoimidazole synthetase</fullName>
    </alternativeName>
</protein>
<organism>
    <name type="scientific">Caldicellulosiruptor saccharolyticus (strain ATCC 43494 / DSM 8903 / Tp8T 6331)</name>
    <dbReference type="NCBI Taxonomy" id="351627"/>
    <lineage>
        <taxon>Bacteria</taxon>
        <taxon>Bacillati</taxon>
        <taxon>Bacillota</taxon>
        <taxon>Bacillota incertae sedis</taxon>
        <taxon>Caldicellulosiruptorales</taxon>
        <taxon>Caldicellulosiruptoraceae</taxon>
        <taxon>Caldicellulosiruptor</taxon>
    </lineage>
</organism>
<accession>A4XKZ4</accession>